<reference evidence="40" key="1">
    <citation type="journal article" date="2004" name="Biochem. J.">
        <title>Hazelnut (Corylus avellana) vicilin Cor a 11: molecular characterization of a glycoprotein and its allergenic activity.</title>
        <authorList>
            <person name="Lauer I."/>
            <person name="Foetisch K."/>
            <person name="Kolarich D."/>
            <person name="Ballmer-Weber B.K."/>
            <person name="Conti A."/>
            <person name="Altmann F."/>
            <person name="Vieths S."/>
            <person name="Scheurer S."/>
        </authorList>
    </citation>
    <scope>NUCLEOTIDE SEQUENCE [MRNA]</scope>
    <scope>PROTEIN SEQUENCE OF 48-59; 56-72; 73-79; 80-89; 92-100; 101-127; 130-136; 140-152; 153-174; 175-201; 202-213; 241-251; 252-268; 269-278; 279-304; 305-315; 319-349; 353-388; 389-394; 395-403; 407-415; 416-419; 420-442 AND 423-445</scope>
    <scope>TISSUE SPECIFICITY</scope>
    <scope>DEVELOPMENTAL STAGE</scope>
    <scope>PTM</scope>
    <scope>IDENTIFICATION BY MASS SPECTROMETRY</scope>
    <scope>ALLERGEN</scope>
    <scope>SITE</scope>
    <scope>GLYCOSYLATION AT ASN-301</scope>
    <scope>CIRCULAR DICHROISM ANALYSIS</scope>
    <source>
        <strain evidence="40">cv. Piemonte</strain>
        <tissue evidence="17">Seed</tissue>
    </source>
</reference>
<reference key="2">
    <citation type="journal article" date="2014" name="J. Agric. Food Chem.">
        <title>Determination of hidden hazelnut oil proteins in extra virgin olive oil by cold acetone precipitation followed by in-solution tryptic digestion and MALDI-TOF-MS analysis.</title>
        <authorList>
            <person name="De Ceglie C."/>
            <person name="Calvano C.D."/>
            <person name="Zambonin C.G."/>
        </authorList>
    </citation>
    <scope>PROTEIN SEQUENCE OF 1-11; 5-13; 73-89; 141-152; 175-201; 216-228; 305-315 AND 395-403</scope>
    <scope>TISSUE SPECIFICITY</scope>
    <scope>IDENTIFICATION BY MASS SPECTROMETRY</scope>
    <scope>BIOTECHNOLOGY</scope>
</reference>
<reference key="3">
    <citation type="journal article" date="2008" name="Mol. Nutr. Food Res.">
        <title>The purification and characterisation of allergenic hazelnut seed proteins.</title>
        <authorList>
            <person name="Rigby N.M."/>
            <person name="Marsh J."/>
            <person name="Sancho A.I."/>
            <person name="Wellner K."/>
            <person name="Akkerdaas J."/>
            <person name="van Ree R."/>
            <person name="Knulst A."/>
            <person name="Fernandez-Rivas M."/>
            <person name="Brettlova V."/>
            <person name="Schilte P.P."/>
            <person name="Summer C."/>
            <person name="Pumphrey R."/>
            <person name="Shewry P.R."/>
            <person name="Mills E.N."/>
        </authorList>
    </citation>
    <scope>PROTEIN SEQUENCE OF 48-62; 73-89; 92-127; 130-136; 140-169; 175-213; 241-278; 305-315; 319-345; 353-388; 395-403; 407-415 AND 423-442</scope>
    <scope>SUBUNIT</scope>
    <scope>TISSUE SPECIFICITY</scope>
    <scope>DEVELOPMENTAL STAGE</scope>
    <scope>PTM</scope>
    <scope>IDENTIFICATION BY MASS SPECTROMETRY</scope>
    <scope>ALLERGEN</scope>
    <scope>CIRCULAR DICHROISM ANALYSIS</scope>
    <source>
        <tissue evidence="18">Seed</tissue>
    </source>
</reference>
<reference evidence="41" key="4">
    <citation type="journal article" date="2020" name="Biochem. Biophys. Res. Commun.">
        <title>Comparative study of 7S globulin from Corylus avellana and Solanum lycopersicum revealed importance of salicylic acid and Cu-binding loop in modulating their function.</title>
        <authorList>
            <person name="Shikhi M."/>
            <person name="Jain A."/>
            <person name="Salunke D.M."/>
        </authorList>
    </citation>
    <scope>PROTEIN SEQUENCE OF 48-67</scope>
    <scope>X-RAY CRYSTALLOGRAPHY (3.19 ANGSTROMS) OF 25-448 IN COMPLEX WITH COPPER</scope>
    <scope>FUNCTION</scope>
    <scope>SUBUNIT</scope>
    <scope>TISSUE SPECIFICITY</scope>
    <scope>IDENTIFICATION BY MASS SPECTROMETRY</scope>
</reference>
<reference key="5">
    <citation type="journal article" date="2012" name="Food Addit. Contam. Part A Chem. Anal. Control Expo. Risk Assess.">
        <title>MALDI-based identification of stable hazelnut protein derived tryptic marker peptides.</title>
        <authorList>
            <person name="Cucu T."/>
            <person name="De Meulenaer B."/>
            <person name="Devreese B."/>
        </authorList>
    </citation>
    <scope>PROTEIN SEQUENCE OF 56-72; 80-89; 92-100; 101-127; 141-152; 153-169; 175-201; 202-213; 241-251; 252-268; 269-278; 279-288; 305-315; 395-403; 407-415 AND 423-435</scope>
    <scope>TISSUE SPECIFICITY</scope>
    <scope>IDENTIFICATION BY MASS SPECTROMETRY</scope>
    <scope>BIOTECHNOLOGY</scope>
</reference>
<reference key="6">
    <citation type="journal article" date="2012" name="Anal. Bioanal. Chem.">
        <title>Marker peptide selection for the determination of hazelnut by LC-MS/MS and occurrence in other nuts.</title>
        <authorList>
            <person name="Ansari P."/>
            <person name="Stoppacher N."/>
            <person name="Baumgartner S."/>
        </authorList>
    </citation>
    <scope>PROTEIN SEQUENCE OF 92-100; 202-213 AND 407-415</scope>
    <scope>TISSUE SPECIFICITY</scope>
    <scope>IDENTIFICATION BY MASS SPECTROMETRY</scope>
    <scope>BIOTECHNOLOGY</scope>
</reference>
<reference key="7">
    <citation type="journal article" date="2014" name="Anal. Bioanal. Chem.">
        <title>Assessing hazelnut allergens by protein- and DNA-based approaches: LC-MS/MS, ELISA and real-time PCR.</title>
        <authorList>
            <person name="Costa J."/>
            <person name="Ansari P."/>
            <person name="Mafra I."/>
            <person name="Oliveira M.B."/>
            <person name="Baumgartner S."/>
        </authorList>
    </citation>
    <scope>PROTEIN SEQUENCE OF 92-100; 202-213 AND 407-415</scope>
    <scope>TISSUE SPECIFICITY</scope>
    <scope>IDENTIFICATION BY MASS SPECTROMETRY</scope>
    <scope>BIOTECHNOLOGY</scope>
</reference>
<reference key="8">
    <citation type="journal article" date="2011" name="J. Agric. Food Chem.">
        <title>Impact of Maillard reaction on immunoreactivity and allergenicity of the hazelnut allergen Cor a 11.</title>
        <authorList>
            <person name="Iwan M."/>
            <person name="Vissers Y.M."/>
            <person name="Fiedorowicz E."/>
            <person name="Kostyra H."/>
            <person name="Kostyra E."/>
            <person name="Savelkoul H.F."/>
            <person name="Wichers H.J."/>
        </authorList>
    </citation>
    <scope>TISSUE SPECIFICITY</scope>
    <scope>ALLERGEN</scope>
</reference>
<reference key="9">
    <citation type="journal article" date="2012" name="J. Clin. Bioinforma.">
        <title>Effects of autoclaving and high pressure on allergenicity of hazelnut proteins.</title>
        <authorList>
            <person name="Lopez E."/>
            <person name="Cuadrado C."/>
            <person name="Burbano C."/>
            <person name="Jimenez M.A."/>
            <person name="Rodriguez J."/>
            <person name="Crespo J.F."/>
        </authorList>
    </citation>
    <scope>TISSUE SPECIFICITY</scope>
    <scope>DEVELOPMENTAL STAGE</scope>
    <scope>ALLERGEN</scope>
    <scope>3D-STRUCTURE MODELING</scope>
</reference>
<reference key="10">
    <citation type="journal article" date="2012" name="J. Investig. Allergol. Clin. Immunol.">
        <title>Age-dependent sensitization to the 7S-vicilin-like protein Cor a 11 from hazelnut (Corylus avellana) in a birch-endemic region.</title>
        <authorList>
            <person name="Verweij M.M."/>
            <person name="Hagendorens M.M."/>
            <person name="Trashin S."/>
            <person name="Cucu T."/>
            <person name="De Meulenaer B."/>
            <person name="Devreese B."/>
            <person name="Bridts C.H."/>
            <person name="De Clerck L.S."/>
            <person name="Ebo D.G."/>
        </authorList>
    </citation>
    <scope>TISSUE SPECIFICITY</scope>
    <scope>DEVELOPMENTAL STAGE</scope>
    <scope>ALLERGEN</scope>
</reference>
<reference key="11">
    <citation type="journal article" date="2013" name="Food Chem.">
        <title>Real Time PCR to detect hazelnut allergen coding sequences in processed foods.</title>
        <authorList>
            <person name="Iniesto E."/>
            <person name="Jimenez A."/>
            <person name="Prieto N."/>
            <person name="Cabanillas B."/>
            <person name="Burbano C."/>
            <person name="Pedrosa M.M."/>
            <person name="Rodriguez J."/>
            <person name="Muzquiz M."/>
            <person name="Crespo J.F."/>
            <person name="Cuadrado C."/>
            <person name="Linacero R."/>
        </authorList>
    </citation>
    <scope>TISSUE SPECIFICITY</scope>
    <scope>DEVELOPMENTAL STAGE</scope>
    <scope>BIOTECHNOLOGY</scope>
</reference>
<reference key="12">
    <citation type="journal article" date="2013" name="Int. J. Food Sci. Technol.">
        <title>Gene transcription analysis of hazelnut (C orylus avellana L.) allergens Cor a 1, Cor a 8 and Cor a 11: a comparative study.</title>
        <authorList>
            <person name="Garino C."/>
            <person name="Locatelli M."/>
            <person name="Coisson J.D."/>
            <person name="D'Andrea M."/>
            <person name="Cereti E."/>
            <person name="Travaglia F."/>
            <person name="Arlorio M."/>
        </authorList>
    </citation>
    <scope>TISSUE SPECIFICITY</scope>
    <scope>DEVELOPMENTAL STAGE</scope>
    <scope>BIOTECHNOLOGY</scope>
</reference>
<reference key="13">
    <citation type="journal article" date="2021" name="Pediatr. Allergy Immunol.">
        <title>Oleosin Cor a 15 is a novel allergen for Italian hazelnut allergic children.</title>
        <authorList>
            <person name="Nebbia S."/>
            <person name="Lamberti C."/>
            <person name="Cirrincione S."/>
            <person name="Acquadro A."/>
            <person name="Abba S."/>
            <person name="Ciuffo M."/>
            <person name="Torello Marinoni D."/>
            <person name="Manfredi M."/>
            <person name="Marengo E."/>
            <person name="Calzedda R."/>
            <person name="Monti G."/>
            <person name="Cavallarin L."/>
            <person name="Giuffrida M.G."/>
        </authorList>
    </citation>
    <scope>ALLERGEN</scope>
</reference>
<comment type="function">
    <text evidence="14 28 29 30 31 32 33 34 35 36 37 39">Seed storage protein (PubMed:15233621, PubMed:19006093, PubMed:21563837, PubMed:21735061, PubMed:22616776, PubMed:22812192, PubMed:22966848, PubMed:23411333, PubMed:24577577, PubMed:25209075, Ref.12). Does not have superoxide dismutase (SOD) activity (PubMed:31753489).</text>
</comment>
<comment type="subunit">
    <text evidence="5 14">Homotrimer (PubMed:19006093, PubMed:31753489). Homohexamer (PubMed:19006093).</text>
</comment>
<comment type="tissue specificity">
    <text evidence="4 5 6 7 8 9 10 11 12 13 14 16">Expressed in seed (at protein level) (PubMed:15233621, PubMed:19006093, PubMed:21563837, PubMed:21735061, PubMed:22616776, PubMed:22812192, PubMed:22966848, PubMed:23411333, PubMed:24577577, PubMed:25209075, PubMed:31753489). Expressed in seed (Ref.12).</text>
</comment>
<comment type="developmental stage">
    <text evidence="4 5 8 9 11 16">Expressed during seed maturation. Expressed at three fruit developmental stages, at early stage (approximately 45 days before harvest), at middle stage (approximately 30 days before harvest) and at final harvest stage. Expressed more in ripe than in unripe seeds (Ref.12). Expressed in raw seeds (PubMed:15233621, PubMed:19006093, PubMed:22616776, PubMed:22812192, PubMed:23411333).</text>
</comment>
<comment type="PTM">
    <text evidence="4">N-glycosylated at Asn-301 mostly with xylosylated paucimannosidic-type N-glycan MMX (an N-linked glycan with beta-1,2-xylose residue in the structure) and also with MMXF (a complex N-linked glycan with alpha-1,3-fucose and beta-1,2-xylose residues in the structure).</text>
</comment>
<comment type="PTM">
    <text evidence="5">A mixture of proteolytically processed and unprocessed subunits exist.</text>
</comment>
<comment type="allergen">
    <text evidence="4 5 6 8 9 15">Causes an allergic reaction in human (PubMed:15233621, PubMed:19006093, PubMed:21563837, PubMed:22616776, PubMed:22812192, PubMed:34146442). Binds to IgE of patients allergic to hazelnuts (PubMed:15233621, PubMed:19006093, PubMed:21563837, PubMed:22616776, PubMed:22812192, PubMed:34146442). Natural glycosylated protein binds to IgE in 47% and recombinant (non-glycosylated) protein in 43-40% of the 65 tested adult patients from Switzerland and Germany (PubMed:15233621). Natural protein binds to IgE in 50% of the tested patients from Netherlands (PubMed:19006093). The IgE-binding of the natural protein can be decreased by glycation (Maillard reaction) of the protein at 60 and 145 (routine hazelnut roasting condition), but not at 37 degrees Celsius (PubMed:21563837). IgE-binding of the natural protein is also strongly reduced by autoclaving at 138 degrees Celsius for 15 or 30 minutes, but not by high pressure treatment alone (300 Mba, 400 Mba, 500 Mba and 600 Mba) (PubMed:22616776). Allerginicity to this protein in a birch-endemic region (Belgium) seems to be predominantly found in children with severe hazelnut allergy compared to adults or children with milder forms of hazelnut-allergy. Natural protein binds to IgE in 36%, 40% and 12.5% of the 22 preschool children, 10 schoolchildren and 8 adults tested, respectively, with systemic allergic reactions toward hazelnut. In a set of 40 patients (6 preschool children, 10 schoolchildren and 24 adults) having oral allergy symptoms, only 2 patients (of preschool age) show IgE-binding to this protein. Also, only 8% of the 24 hazelnut-allergic infants with atopic dermatitis tested show IgE reactivity to this protein (PubMed:22812192). Induces histamine release from human basophils (PubMed:15233621, PubMed:22812192). Both natural and recombinant proteins induce histamine release from human basophils in a similar manner indicating that the carbohydrate structures are not involved in IgE-binding (PubMed:15233621). Induces beta-hexosaminidase release from humanized rat basophilic leukemia (RBL) cells. Heating, with or without glucose, at 145 degrees Celsius increases the basophil degranulation capacity (PubMed:21563837).</text>
</comment>
<comment type="biotechnology">
    <text evidence="7 10 11 12 13 16">In order to protect patients that are allergic to hazelnuts, it is extremely important to find ways to detect trace amounts of hazelnut in foods that should not contain it for the food labeling and safety purposes. This protein is used in the development of these methods (PubMed:21735061, PubMed:22966848, PubMed:23411333, PubMed:24577577, PubMed:25209075). For the detection of hazelnut, a liquid chromatography tandem mass spectrometry (LC-MS/MS) method in selected reaction monitoring (SRM) mode is developed by using selected marker peptides from this protein as standards (PubMed:21735061). It is found that LC-MS/MS performs well in detecting these peptides in prepared model chocolates spiked with hazelnut. The sensitivity level is approximately 1 mg/kg (PubMed:24577577). A stable peptide (residues 395-403) from this protein is identified by MALDI-MS and it can s be used as an analytical target for the development of robust quantitative analytical methods. This peptide is identifiable even when the protein goes through a number of changes at the molecular level, such as denaturation, the Maillard reaction and oxidation, reactions that typically occur during food processing (PubMed:22966848). A quantitative method is developed, where the coding DNA of this protein is first extracted based on hexadecyltrimethylammonium bromide (CTAB)-phenol-chloroform method and then detected by Real-Time PCR (RT-PCR) in commercial foods such as chocolates, biscuits, cereal snacks, cookies and nougat with 100% specificity and with 1 ppm sensitivity limit of detection of raw hazelnut. The reliability of the method is even more improved if two other hazelnut target genes (allergens Cor a 9 and Cor a 13) are amplified in addition to this one. The detection is proven to be accurate even when the quality and quantity of the DNA is greatly diminished by roasting and autoclaving. High-hydrostatic pressure treatment has no effect on DNA (PubMed:23411333). The transcription level of the gene encoding this protein is investigated by a relative quantitative RT-PCR technique in order to compare the transcript amounts between different cultivars, and in one of the cultivars also in relation to different years of harvest and ripening stages. Each hazelnut sample is classified by the Principal Components Analysis (PCA) to better interpret the results. The method may help in choosing hypoallergenic genotypes of hazelnut for both growers and consumers (Ref.12). Cold acetone extraction of proteins followed by in-solution tryptic digestion and MALDI-TOF-MS (in alpha-cyano-4-chlorocinnamic acid matrix) is found as a rapid and sensitive method to detect residual amounts of hazelnut proteins in extra virgin olive oil samples, which have been adulterated with cold-pressed hazelnut oil. Peptides from this protein can be used as stable markers in this technique serving as a direct proof of illegal hazelnut existence in olive oil (PubMed:25209075).</text>
</comment>
<comment type="similarity">
    <text evidence="27">Belongs to the 7S seed storage protein family.</text>
</comment>
<organism evidence="40">
    <name type="scientific">Corylus avellana</name>
    <name type="common">European hazel</name>
    <name type="synonym">Corylus maxima</name>
    <dbReference type="NCBI Taxonomy" id="13451"/>
    <lineage>
        <taxon>Eukaryota</taxon>
        <taxon>Viridiplantae</taxon>
        <taxon>Streptophyta</taxon>
        <taxon>Embryophyta</taxon>
        <taxon>Tracheophyta</taxon>
        <taxon>Spermatophyta</taxon>
        <taxon>Magnoliopsida</taxon>
        <taxon>eudicotyledons</taxon>
        <taxon>Gunneridae</taxon>
        <taxon>Pentapetalae</taxon>
        <taxon>rosids</taxon>
        <taxon>fabids</taxon>
        <taxon>Fagales</taxon>
        <taxon>Betulaceae</taxon>
        <taxon>Corylus</taxon>
    </lineage>
</organism>
<feature type="chain" id="PRO_0000451919" description="Vicilin Cor a 11.0101">
    <location>
        <begin position="1"/>
        <end position="448"/>
    </location>
</feature>
<feature type="domain" description="Cupin type-1 1" evidence="1">
    <location>
        <begin position="84"/>
        <end position="220"/>
    </location>
</feature>
<feature type="domain" description="Cupin type-1 2" evidence="1">
    <location>
        <begin position="263"/>
        <end position="418"/>
    </location>
</feature>
<feature type="region of interest" description="Disordered" evidence="3">
    <location>
        <begin position="1"/>
        <end position="66"/>
    </location>
</feature>
<feature type="compositionally biased region" description="Basic and acidic residues" evidence="3">
    <location>
        <begin position="1"/>
        <end position="44"/>
    </location>
</feature>
<feature type="binding site" evidence="14 41">
    <location>
        <position position="333"/>
    </location>
    <ligand>
        <name>Cu cation</name>
        <dbReference type="ChEBI" id="CHEBI:23378"/>
    </ligand>
</feature>
<feature type="binding site" evidence="14 41">
    <location>
        <position position="335"/>
    </location>
    <ligand>
        <name>Cu cation</name>
        <dbReference type="ChEBI" id="CHEBI:23378"/>
    </ligand>
</feature>
<feature type="binding site" evidence="14 41">
    <location>
        <position position="362"/>
    </location>
    <ligand>
        <name>Cu cation</name>
        <dbReference type="ChEBI" id="CHEBI:23378"/>
    </ligand>
</feature>
<feature type="site" description="Cleavage" evidence="29 38">
    <location>
        <begin position="47"/>
        <end position="48"/>
    </location>
</feature>
<feature type="site" description="Not glycosylated" evidence="4">
    <location>
        <position position="85"/>
    </location>
</feature>
<feature type="glycosylation site" description="N-linked (GlcNAc...) asparagine" evidence="2">
    <location>
        <position position="47"/>
    </location>
</feature>
<feature type="glycosylation site" description="N-linked (GlcNAc...) asparagine" evidence="2 4">
    <location>
        <position position="301"/>
    </location>
</feature>
<feature type="sequence conflict" description="In Ref. 4; AA sequence." evidence="27" ref="4">
    <original>S</original>
    <variation>E</variation>
    <location>
        <position position="49"/>
    </location>
</feature>
<feature type="sequence conflict" description="In Ref. 1; AA sequence and 4; AA sequence." evidence="27" ref="1 4">
    <original>K</original>
    <variation>E</variation>
    <location>
        <position position="55"/>
    </location>
</feature>
<feature type="sequence conflict" description="In Ref. 1; AA sequence." evidence="27" ref="1">
    <original>E</original>
    <variation>D</variation>
    <location>
        <position position="58"/>
    </location>
</feature>
<feature type="sequence conflict" description="In Ref. 1; AA sequence and 4; AA sequence." evidence="27" ref="1 4">
    <original>E</original>
    <variation>N</variation>
    <location>
        <position position="59"/>
    </location>
</feature>
<feature type="sequence conflict" description="In Ref. 4; AA sequence." evidence="27" ref="4">
    <original>F</original>
    <variation>L</variation>
    <location>
        <position position="64"/>
    </location>
</feature>
<feature type="helix" evidence="42">
    <location>
        <begin position="66"/>
        <end position="68"/>
    </location>
</feature>
<feature type="strand" evidence="42">
    <location>
        <begin position="69"/>
        <end position="75"/>
    </location>
</feature>
<feature type="strand" evidence="42">
    <location>
        <begin position="78"/>
        <end position="83"/>
    </location>
</feature>
<feature type="helix" evidence="42">
    <location>
        <begin position="94"/>
        <end position="96"/>
    </location>
</feature>
<feature type="strand" evidence="42">
    <location>
        <begin position="100"/>
        <end position="106"/>
    </location>
</feature>
<feature type="strand" evidence="42">
    <location>
        <begin position="110"/>
        <end position="128"/>
    </location>
</feature>
<feature type="strand" evidence="42">
    <location>
        <begin position="130"/>
        <end position="135"/>
    </location>
</feature>
<feature type="strand" evidence="42">
    <location>
        <begin position="137"/>
        <end position="145"/>
    </location>
</feature>
<feature type="strand" evidence="42">
    <location>
        <begin position="149"/>
        <end position="153"/>
    </location>
</feature>
<feature type="strand" evidence="42">
    <location>
        <begin position="159"/>
        <end position="162"/>
    </location>
</feature>
<feature type="strand" evidence="42">
    <location>
        <begin position="166"/>
        <end position="168"/>
    </location>
</feature>
<feature type="strand" evidence="42">
    <location>
        <begin position="170"/>
        <end position="181"/>
    </location>
</feature>
<feature type="turn" evidence="42">
    <location>
        <begin position="194"/>
        <end position="196"/>
    </location>
</feature>
<feature type="helix" evidence="42">
    <location>
        <begin position="199"/>
        <end position="202"/>
    </location>
</feature>
<feature type="helix" evidence="42">
    <location>
        <begin position="205"/>
        <end position="212"/>
    </location>
</feature>
<feature type="helix" evidence="42">
    <location>
        <begin position="216"/>
        <end position="222"/>
    </location>
</feature>
<feature type="strand" evidence="42">
    <location>
        <begin position="230"/>
        <end position="233"/>
    </location>
</feature>
<feature type="turn" evidence="42">
    <location>
        <begin position="238"/>
        <end position="242"/>
    </location>
</feature>
<feature type="strand" evidence="42">
    <location>
        <begin position="257"/>
        <end position="259"/>
    </location>
</feature>
<feature type="strand" evidence="42">
    <location>
        <begin position="263"/>
        <end position="265"/>
    </location>
</feature>
<feature type="strand" evidence="42">
    <location>
        <begin position="271"/>
        <end position="274"/>
    </location>
</feature>
<feature type="strand" evidence="42">
    <location>
        <begin position="277"/>
        <end position="282"/>
    </location>
</feature>
<feature type="helix" evidence="42">
    <location>
        <begin position="284"/>
        <end position="286"/>
    </location>
</feature>
<feature type="helix" evidence="42">
    <location>
        <begin position="290"/>
        <end position="292"/>
    </location>
</feature>
<feature type="strand" evidence="42">
    <location>
        <begin position="295"/>
        <end position="302"/>
    </location>
</feature>
<feature type="strand" evidence="42">
    <location>
        <begin position="306"/>
        <end position="315"/>
    </location>
</feature>
<feature type="strand" evidence="42">
    <location>
        <begin position="317"/>
        <end position="325"/>
    </location>
</feature>
<feature type="strand" evidence="42">
    <location>
        <begin position="327"/>
        <end position="336"/>
    </location>
</feature>
<feature type="strand" evidence="42">
    <location>
        <begin position="339"/>
        <end position="341"/>
    </location>
</feature>
<feature type="strand" evidence="42">
    <location>
        <begin position="344"/>
        <end position="350"/>
    </location>
</feature>
<feature type="strand" evidence="42">
    <location>
        <begin position="355"/>
        <end position="358"/>
    </location>
</feature>
<feature type="strand" evidence="42">
    <location>
        <begin position="364"/>
        <end position="368"/>
    </location>
</feature>
<feature type="strand" evidence="42">
    <location>
        <begin position="370"/>
        <end position="372"/>
    </location>
</feature>
<feature type="strand" evidence="42">
    <location>
        <begin position="374"/>
        <end position="382"/>
    </location>
</feature>
<feature type="strand" evidence="42">
    <location>
        <begin position="388"/>
        <end position="393"/>
    </location>
</feature>
<feature type="turn" evidence="42">
    <location>
        <begin position="397"/>
        <end position="400"/>
    </location>
</feature>
<feature type="helix" evidence="42">
    <location>
        <begin position="403"/>
        <end position="410"/>
    </location>
</feature>
<feature type="helix" evidence="42">
    <location>
        <begin position="414"/>
        <end position="417"/>
    </location>
</feature>
<feature type="helix" evidence="42">
    <location>
        <begin position="418"/>
        <end position="420"/>
    </location>
</feature>
<feature type="strand" evidence="42">
    <location>
        <begin position="428"/>
        <end position="431"/>
    </location>
</feature>
<dbReference type="EMBL" id="AF441864">
    <property type="protein sequence ID" value="AAL86739.1"/>
    <property type="molecule type" value="mRNA"/>
</dbReference>
<dbReference type="PDB" id="6L4C">
    <property type="method" value="X-ray"/>
    <property type="resolution" value="3.19 A"/>
    <property type="chains" value="A/B/C=25-448"/>
</dbReference>
<dbReference type="PDBsum" id="6L4C"/>
<dbReference type="SMR" id="Q8S4P9"/>
<dbReference type="Allergome" id="3216">
    <property type="allergen name" value="Cor a 11.0101"/>
</dbReference>
<dbReference type="Allergome" id="690">
    <property type="allergen name" value="Cor a 11"/>
</dbReference>
<dbReference type="iPTMnet" id="Q8S4P9"/>
<dbReference type="GO" id="GO:0043245">
    <property type="term" value="C:extraorganismal space"/>
    <property type="evidence" value="ECO:0000314"/>
    <property type="project" value="UniProtKB"/>
</dbReference>
<dbReference type="GO" id="GO:0005507">
    <property type="term" value="F:copper ion binding"/>
    <property type="evidence" value="ECO:0000314"/>
    <property type="project" value="UniProtKB"/>
</dbReference>
<dbReference type="GO" id="GO:0045735">
    <property type="term" value="F:nutrient reservoir activity"/>
    <property type="evidence" value="ECO:0000314"/>
    <property type="project" value="UniProtKB"/>
</dbReference>
<dbReference type="GO" id="GO:0034214">
    <property type="term" value="P:protein hexamerization"/>
    <property type="evidence" value="ECO:0000314"/>
    <property type="project" value="UniProtKB"/>
</dbReference>
<dbReference type="GO" id="GO:0070207">
    <property type="term" value="P:protein homotrimerization"/>
    <property type="evidence" value="ECO:0000314"/>
    <property type="project" value="UniProtKB"/>
</dbReference>
<dbReference type="CDD" id="cd02245">
    <property type="entry name" value="cupin_7S_vicilin-like_C"/>
    <property type="match status" value="1"/>
</dbReference>
<dbReference type="CDD" id="cd02244">
    <property type="entry name" value="cupin_7S_vicilin-like_N"/>
    <property type="match status" value="1"/>
</dbReference>
<dbReference type="Gene3D" id="2.60.120.10">
    <property type="entry name" value="Jelly Rolls"/>
    <property type="match status" value="2"/>
</dbReference>
<dbReference type="InterPro" id="IPR006045">
    <property type="entry name" value="Cupin_1"/>
</dbReference>
<dbReference type="InterPro" id="IPR014710">
    <property type="entry name" value="RmlC-like_jellyroll"/>
</dbReference>
<dbReference type="InterPro" id="IPR011051">
    <property type="entry name" value="RmlC_Cupin_sf"/>
</dbReference>
<dbReference type="InterPro" id="IPR050253">
    <property type="entry name" value="Seed_Storage-Functional"/>
</dbReference>
<dbReference type="PANTHER" id="PTHR31189:SF13">
    <property type="entry name" value="CUPINCIN"/>
    <property type="match status" value="1"/>
</dbReference>
<dbReference type="PANTHER" id="PTHR31189">
    <property type="entry name" value="OS03G0336100 PROTEIN-RELATED"/>
    <property type="match status" value="1"/>
</dbReference>
<dbReference type="Pfam" id="PF00190">
    <property type="entry name" value="Cupin_1"/>
    <property type="match status" value="2"/>
</dbReference>
<dbReference type="SMART" id="SM00835">
    <property type="entry name" value="Cupin_1"/>
    <property type="match status" value="2"/>
</dbReference>
<dbReference type="SUPFAM" id="SSF51182">
    <property type="entry name" value="RmlC-like cupins"/>
    <property type="match status" value="2"/>
</dbReference>
<sequence>MLPKEDPELKKCKHKCRDERQFDEQQRRDGKQICEEKARERQQEEGNSSEESYGKEQEENPYVFQDEHFESRVKTEEGRVQVLENFTKRSRLLSGIENFRLAILEANPHTFISPAHFDAELVLFVAKGRATITMVREEKRESFNVEHGDIIRIPAGTPVYMINRDENEKLFIVKILQPVSAPGHFEAFYGAGGEDPESFYRAFSWEVLEAALKVRREQLEKVFGEQSKGSIVKASREKIRALSQHEEGPPRIWPFGGESSGPINLLHKHPSQSNQFGRLYEAHPDDHKQLQDLDLMVSFANITKGSMAGPYYNSRATKISVVVEGEGFFEMACPHLSSSSGSYQKISARLRRGVVFVAPAGHPVAVIASQNNNLQVLCFEVNAHGNSRFPLAGKGNIVNEFERDAKELAFNLPSREVERIFKNQDQAFFFPGPNKQQEEGGRGGRAFE</sequence>
<evidence type="ECO:0000255" key="1"/>
<evidence type="ECO:0000255" key="2">
    <source>
        <dbReference type="PROSITE-ProRule" id="PRU00498"/>
    </source>
</evidence>
<evidence type="ECO:0000256" key="3">
    <source>
        <dbReference type="SAM" id="MobiDB-lite"/>
    </source>
</evidence>
<evidence type="ECO:0000269" key="4">
    <source>
    </source>
</evidence>
<evidence type="ECO:0000269" key="5">
    <source>
    </source>
</evidence>
<evidence type="ECO:0000269" key="6">
    <source>
    </source>
</evidence>
<evidence type="ECO:0000269" key="7">
    <source>
    </source>
</evidence>
<evidence type="ECO:0000269" key="8">
    <source>
    </source>
</evidence>
<evidence type="ECO:0000269" key="9">
    <source>
    </source>
</evidence>
<evidence type="ECO:0000269" key="10">
    <source>
    </source>
</evidence>
<evidence type="ECO:0000269" key="11">
    <source>
    </source>
</evidence>
<evidence type="ECO:0000269" key="12">
    <source>
    </source>
</evidence>
<evidence type="ECO:0000269" key="13">
    <source>
    </source>
</evidence>
<evidence type="ECO:0000269" key="14">
    <source>
    </source>
</evidence>
<evidence type="ECO:0000269" key="15">
    <source>
    </source>
</evidence>
<evidence type="ECO:0000269" key="16">
    <source ref="12"/>
</evidence>
<evidence type="ECO:0000303" key="17">
    <source>
    </source>
</evidence>
<evidence type="ECO:0000303" key="18">
    <source>
    </source>
</evidence>
<evidence type="ECO:0000303" key="19">
    <source>
    </source>
</evidence>
<evidence type="ECO:0000303" key="20">
    <source>
    </source>
</evidence>
<evidence type="ECO:0000303" key="21">
    <source>
    </source>
</evidence>
<evidence type="ECO:0000303" key="22">
    <source>
    </source>
</evidence>
<evidence type="ECO:0000303" key="23">
    <source>
    </source>
</evidence>
<evidence type="ECO:0000303" key="24">
    <source>
    </source>
</evidence>
<evidence type="ECO:0000303" key="25">
    <source>
    </source>
</evidence>
<evidence type="ECO:0000303" key="26">
    <source ref="12"/>
</evidence>
<evidence type="ECO:0000305" key="27"/>
<evidence type="ECO:0000305" key="28">
    <source>
    </source>
</evidence>
<evidence type="ECO:0000305" key="29">
    <source>
    </source>
</evidence>
<evidence type="ECO:0000305" key="30">
    <source>
    </source>
</evidence>
<evidence type="ECO:0000305" key="31">
    <source>
    </source>
</evidence>
<evidence type="ECO:0000305" key="32">
    <source>
    </source>
</evidence>
<evidence type="ECO:0000305" key="33">
    <source>
    </source>
</evidence>
<evidence type="ECO:0000305" key="34">
    <source>
    </source>
</evidence>
<evidence type="ECO:0000305" key="35">
    <source>
    </source>
</evidence>
<evidence type="ECO:0000305" key="36">
    <source>
    </source>
</evidence>
<evidence type="ECO:0000305" key="37">
    <source>
    </source>
</evidence>
<evidence type="ECO:0000305" key="38">
    <source>
    </source>
</evidence>
<evidence type="ECO:0000305" key="39">
    <source ref="12"/>
</evidence>
<evidence type="ECO:0000312" key="40">
    <source>
        <dbReference type="EMBL" id="AAL86739.1"/>
    </source>
</evidence>
<evidence type="ECO:0007744" key="41">
    <source>
        <dbReference type="PDB" id="6L4C"/>
    </source>
</evidence>
<evidence type="ECO:0007829" key="42">
    <source>
        <dbReference type="PDB" id="6L4C"/>
    </source>
</evidence>
<keyword id="KW-0002">3D-structure</keyword>
<keyword id="KW-0020">Allergen</keyword>
<keyword id="KW-0186">Copper</keyword>
<keyword id="KW-0903">Direct protein sequencing</keyword>
<keyword id="KW-0325">Glycoprotein</keyword>
<keyword id="KW-0479">Metal-binding</keyword>
<keyword id="KW-0677">Repeat</keyword>
<keyword id="KW-0708">Seed storage protein</keyword>
<keyword id="KW-0758">Storage protein</keyword>
<proteinExistence type="evidence at protein level"/>
<name>VCL_CORAV</name>
<protein>
    <recommendedName>
        <fullName evidence="27">Vicilin Cor a 11.0101</fullName>
    </recommendedName>
    <alternativeName>
        <fullName evidence="18 19 20 25">7S globulin</fullName>
    </alternativeName>
    <alternativeName>
        <fullName evidence="18">7S seed storage protein</fullName>
    </alternativeName>
    <alternativeName>
        <fullName evidence="22 26">7S vicilin-like protein Cor a 11</fullName>
    </alternativeName>
    <alternativeName>
        <fullName evidence="19 23 24 26">Allergen Cor a 11</fullName>
    </alternativeName>
    <alternativeName>
        <fullName evidence="17 19 20 21">Vicilin Cor a 11</fullName>
    </alternativeName>
    <alternativeName>
        <fullName evidence="25">Vicilin HZ.1</fullName>
    </alternativeName>
    <allergenName evidence="27">Cor a 11.0101</allergenName>
</protein>
<accession>Q8S4P9</accession>